<protein>
    <recommendedName>
        <fullName evidence="1">Small ribosomal subunit protein uS7</fullName>
    </recommendedName>
    <alternativeName>
        <fullName evidence="2">30S ribosomal protein S7</fullName>
    </alternativeName>
</protein>
<comment type="function">
    <text evidence="1">One of the primary rRNA binding proteins, it binds directly to 16S rRNA where it nucleates assembly of the head domain of the 30S subunit. Is located at the subunit interface close to the decoding center, probably blocks exit of the E-site tRNA.</text>
</comment>
<comment type="subunit">
    <text evidence="1">Part of the 30S ribosomal subunit. Contacts proteins S9 and S11.</text>
</comment>
<comment type="similarity">
    <text evidence="1">Belongs to the universal ribosomal protein uS7 family.</text>
</comment>
<name>RS7_RHOCA</name>
<dbReference type="EMBL" id="AY099291">
    <property type="protein sequence ID" value="AAM92274.1"/>
    <property type="molecule type" value="Genomic_DNA"/>
</dbReference>
<dbReference type="RefSeq" id="WP_013066041.1">
    <property type="nucleotide sequence ID" value="NZ_VIBE01000009.1"/>
</dbReference>
<dbReference type="SMR" id="P59061"/>
<dbReference type="GeneID" id="31489253"/>
<dbReference type="OMA" id="DDTHRMA"/>
<dbReference type="GO" id="GO:0015935">
    <property type="term" value="C:small ribosomal subunit"/>
    <property type="evidence" value="ECO:0007669"/>
    <property type="project" value="InterPro"/>
</dbReference>
<dbReference type="GO" id="GO:0019843">
    <property type="term" value="F:rRNA binding"/>
    <property type="evidence" value="ECO:0007669"/>
    <property type="project" value="UniProtKB-UniRule"/>
</dbReference>
<dbReference type="GO" id="GO:0003735">
    <property type="term" value="F:structural constituent of ribosome"/>
    <property type="evidence" value="ECO:0007669"/>
    <property type="project" value="InterPro"/>
</dbReference>
<dbReference type="GO" id="GO:0000049">
    <property type="term" value="F:tRNA binding"/>
    <property type="evidence" value="ECO:0007669"/>
    <property type="project" value="UniProtKB-UniRule"/>
</dbReference>
<dbReference type="GO" id="GO:0006412">
    <property type="term" value="P:translation"/>
    <property type="evidence" value="ECO:0007669"/>
    <property type="project" value="UniProtKB-UniRule"/>
</dbReference>
<dbReference type="CDD" id="cd14869">
    <property type="entry name" value="uS7_Bacteria"/>
    <property type="match status" value="1"/>
</dbReference>
<dbReference type="FunFam" id="1.10.455.10:FF:000001">
    <property type="entry name" value="30S ribosomal protein S7"/>
    <property type="match status" value="1"/>
</dbReference>
<dbReference type="Gene3D" id="1.10.455.10">
    <property type="entry name" value="Ribosomal protein S7 domain"/>
    <property type="match status" value="1"/>
</dbReference>
<dbReference type="HAMAP" id="MF_00480_B">
    <property type="entry name" value="Ribosomal_uS7_B"/>
    <property type="match status" value="1"/>
</dbReference>
<dbReference type="InterPro" id="IPR000235">
    <property type="entry name" value="Ribosomal_uS7"/>
</dbReference>
<dbReference type="InterPro" id="IPR005717">
    <property type="entry name" value="Ribosomal_uS7_bac/org-type"/>
</dbReference>
<dbReference type="InterPro" id="IPR020606">
    <property type="entry name" value="Ribosomal_uS7_CS"/>
</dbReference>
<dbReference type="InterPro" id="IPR023798">
    <property type="entry name" value="Ribosomal_uS7_dom"/>
</dbReference>
<dbReference type="InterPro" id="IPR036823">
    <property type="entry name" value="Ribosomal_uS7_dom_sf"/>
</dbReference>
<dbReference type="NCBIfam" id="TIGR01029">
    <property type="entry name" value="rpsG_bact"/>
    <property type="match status" value="1"/>
</dbReference>
<dbReference type="PANTHER" id="PTHR11205">
    <property type="entry name" value="RIBOSOMAL PROTEIN S7"/>
    <property type="match status" value="1"/>
</dbReference>
<dbReference type="Pfam" id="PF00177">
    <property type="entry name" value="Ribosomal_S7"/>
    <property type="match status" value="1"/>
</dbReference>
<dbReference type="PIRSF" id="PIRSF002122">
    <property type="entry name" value="RPS7p_RPS7a_RPS5e_RPS7o"/>
    <property type="match status" value="1"/>
</dbReference>
<dbReference type="SUPFAM" id="SSF47973">
    <property type="entry name" value="Ribosomal protein S7"/>
    <property type="match status" value="1"/>
</dbReference>
<dbReference type="PROSITE" id="PS00052">
    <property type="entry name" value="RIBOSOMAL_S7"/>
    <property type="match status" value="1"/>
</dbReference>
<gene>
    <name evidence="1" type="primary">rpsG</name>
</gene>
<accession>P59061</accession>
<reference key="1">
    <citation type="journal article" date="2002" name="Mol. Biol. Evol.">
        <title>Proliferation and deterioration of Rickettsia palindromic elements.</title>
        <authorList>
            <person name="Amiri H."/>
            <person name="Alsmark C.M."/>
            <person name="Andersson S.G.E."/>
        </authorList>
    </citation>
    <scope>NUCLEOTIDE SEQUENCE [GENOMIC DNA]</scope>
</reference>
<evidence type="ECO:0000255" key="1">
    <source>
        <dbReference type="HAMAP-Rule" id="MF_00480"/>
    </source>
</evidence>
<evidence type="ECO:0000305" key="2"/>
<organism>
    <name type="scientific">Rhodobacter capsulatus</name>
    <name type="common">Rhodopseudomonas capsulata</name>
    <dbReference type="NCBI Taxonomy" id="1061"/>
    <lineage>
        <taxon>Bacteria</taxon>
        <taxon>Pseudomonadati</taxon>
        <taxon>Pseudomonadota</taxon>
        <taxon>Alphaproteobacteria</taxon>
        <taxon>Rhodobacterales</taxon>
        <taxon>Rhodobacter group</taxon>
        <taxon>Rhodobacter</taxon>
    </lineage>
</organism>
<proteinExistence type="inferred from homology"/>
<sequence length="156" mass="17902">MSRRHAAEKREVLPDAKYGDRVLTKFMNNLMIDGKKSVAERIVYSALERVEGRVKRAPVEVFHEALDNVKPSVEVRSRRVGGATYQVPVEVRPSRREALAIRWLINAAKNRNENTMEERLAGELLDAMNSRGSAVKKREDTHKMADANKAFSHYRW</sequence>
<feature type="chain" id="PRO_0000124329" description="Small ribosomal subunit protein uS7">
    <location>
        <begin position="1"/>
        <end position="156"/>
    </location>
</feature>
<keyword id="KW-0687">Ribonucleoprotein</keyword>
<keyword id="KW-0689">Ribosomal protein</keyword>
<keyword id="KW-0694">RNA-binding</keyword>
<keyword id="KW-0699">rRNA-binding</keyword>
<keyword id="KW-0820">tRNA-binding</keyword>